<dbReference type="EC" id="6.1.1.20" evidence="4"/>
<dbReference type="EMBL" id="BC066611">
    <property type="protein sequence ID" value="AAH66611.1"/>
    <property type="molecule type" value="mRNA"/>
</dbReference>
<dbReference type="EMBL" id="BC116564">
    <property type="protein sequence ID" value="AAI16565.1"/>
    <property type="molecule type" value="mRNA"/>
</dbReference>
<dbReference type="RefSeq" id="NP_001038760.2">
    <property type="nucleotide sequence ID" value="NM_001045295.2"/>
</dbReference>
<dbReference type="SMR" id="Q1JPX3"/>
<dbReference type="FunCoup" id="Q1JPX3">
    <property type="interactions" value="2119"/>
</dbReference>
<dbReference type="STRING" id="7955.ENSDARP00000132548"/>
<dbReference type="PaxDb" id="7955-ENSDARP00000034945"/>
<dbReference type="Ensembl" id="ENSDART00000164767">
    <property type="protein sequence ID" value="ENSDARP00000132548"/>
    <property type="gene ID" value="ENSDARG00000098825"/>
</dbReference>
<dbReference type="GeneID" id="692329"/>
<dbReference type="KEGG" id="dre:692329"/>
<dbReference type="AGR" id="ZFIN:ZDB-GENE-050512-2"/>
<dbReference type="CTD" id="2193"/>
<dbReference type="ZFIN" id="ZDB-GENE-050512-2">
    <property type="gene designation" value="farsa"/>
</dbReference>
<dbReference type="eggNOG" id="KOG2784">
    <property type="taxonomic scope" value="Eukaryota"/>
</dbReference>
<dbReference type="HOGENOM" id="CLU_025086_2_2_1"/>
<dbReference type="InParanoid" id="Q1JPX3"/>
<dbReference type="OMA" id="QIEGWVM"/>
<dbReference type="OrthoDB" id="238316at2759"/>
<dbReference type="PhylomeDB" id="Q1JPX3"/>
<dbReference type="TreeFam" id="TF300647"/>
<dbReference type="PRO" id="PR:Q1JPX3"/>
<dbReference type="Proteomes" id="UP000000437">
    <property type="component" value="Chromosome 3"/>
</dbReference>
<dbReference type="Bgee" id="ENSDARG00000098825">
    <property type="expression patterns" value="Expressed in bone element and 29 other cell types or tissues"/>
</dbReference>
<dbReference type="GO" id="GO:0005737">
    <property type="term" value="C:cytoplasm"/>
    <property type="evidence" value="ECO:0000250"/>
    <property type="project" value="UniProtKB"/>
</dbReference>
<dbReference type="GO" id="GO:0009328">
    <property type="term" value="C:phenylalanine-tRNA ligase complex"/>
    <property type="evidence" value="ECO:0000250"/>
    <property type="project" value="UniProtKB"/>
</dbReference>
<dbReference type="GO" id="GO:0005524">
    <property type="term" value="F:ATP binding"/>
    <property type="evidence" value="ECO:0007669"/>
    <property type="project" value="UniProtKB-KW"/>
</dbReference>
<dbReference type="GO" id="GO:0000287">
    <property type="term" value="F:magnesium ion binding"/>
    <property type="evidence" value="ECO:0000250"/>
    <property type="project" value="UniProtKB"/>
</dbReference>
<dbReference type="GO" id="GO:0004826">
    <property type="term" value="F:phenylalanine-tRNA ligase activity"/>
    <property type="evidence" value="ECO:0000250"/>
    <property type="project" value="UniProtKB"/>
</dbReference>
<dbReference type="GO" id="GO:0000049">
    <property type="term" value="F:tRNA binding"/>
    <property type="evidence" value="ECO:0007669"/>
    <property type="project" value="InterPro"/>
</dbReference>
<dbReference type="GO" id="GO:0006432">
    <property type="term" value="P:phenylalanyl-tRNA aminoacylation"/>
    <property type="evidence" value="ECO:0000250"/>
    <property type="project" value="UniProtKB"/>
</dbReference>
<dbReference type="GO" id="GO:0051290">
    <property type="term" value="P:protein heterotetramerization"/>
    <property type="evidence" value="ECO:0000250"/>
    <property type="project" value="UniProtKB"/>
</dbReference>
<dbReference type="CDD" id="cd00496">
    <property type="entry name" value="PheRS_alpha_core"/>
    <property type="match status" value="1"/>
</dbReference>
<dbReference type="FunFam" id="1.10.10.2320:FF:000001">
    <property type="entry name" value="phenylalanine--tRNA ligase alpha subunit"/>
    <property type="match status" value="1"/>
</dbReference>
<dbReference type="FunFam" id="1.10.10.2330:FF:000001">
    <property type="entry name" value="phenylalanine--tRNA ligase alpha subunit"/>
    <property type="match status" value="1"/>
</dbReference>
<dbReference type="FunFam" id="3.30.930.10:FF:000036">
    <property type="entry name" value="phenylalanine--tRNA ligase alpha subunit"/>
    <property type="match status" value="1"/>
</dbReference>
<dbReference type="Gene3D" id="1.10.10.2320">
    <property type="match status" value="1"/>
</dbReference>
<dbReference type="Gene3D" id="1.10.10.2330">
    <property type="match status" value="1"/>
</dbReference>
<dbReference type="Gene3D" id="3.30.1370.240">
    <property type="match status" value="1"/>
</dbReference>
<dbReference type="Gene3D" id="3.30.930.10">
    <property type="entry name" value="Bira Bifunctional Protein, Domain 2"/>
    <property type="match status" value="1"/>
</dbReference>
<dbReference type="InterPro" id="IPR006195">
    <property type="entry name" value="aa-tRNA-synth_II"/>
</dbReference>
<dbReference type="InterPro" id="IPR045864">
    <property type="entry name" value="aa-tRNA-synth_II/BPL/LPL"/>
</dbReference>
<dbReference type="InterPro" id="IPR004529">
    <property type="entry name" value="Phe-tRNA-synth_IIc_asu"/>
</dbReference>
<dbReference type="InterPro" id="IPR002319">
    <property type="entry name" value="Phenylalanyl-tRNA_Synthase"/>
</dbReference>
<dbReference type="InterPro" id="IPR040724">
    <property type="entry name" value="PheRS_DBD1"/>
</dbReference>
<dbReference type="InterPro" id="IPR040586">
    <property type="entry name" value="PheRS_DBD2"/>
</dbReference>
<dbReference type="InterPro" id="IPR040725">
    <property type="entry name" value="PheRS_DBD3"/>
</dbReference>
<dbReference type="InterPro" id="IPR036390">
    <property type="entry name" value="WH_DNA-bd_sf"/>
</dbReference>
<dbReference type="NCBIfam" id="TIGR00468">
    <property type="entry name" value="pheS"/>
    <property type="match status" value="1"/>
</dbReference>
<dbReference type="NCBIfam" id="NF003210">
    <property type="entry name" value="PRK04172.1"/>
    <property type="match status" value="1"/>
</dbReference>
<dbReference type="PANTHER" id="PTHR11538:SF40">
    <property type="entry name" value="PHENYLALANINE--TRNA LIGASE ALPHA SUBUNIT"/>
    <property type="match status" value="1"/>
</dbReference>
<dbReference type="PANTHER" id="PTHR11538">
    <property type="entry name" value="PHENYLALANYL-TRNA SYNTHETASE"/>
    <property type="match status" value="1"/>
</dbReference>
<dbReference type="Pfam" id="PF18552">
    <property type="entry name" value="PheRS_DBD1"/>
    <property type="match status" value="1"/>
</dbReference>
<dbReference type="Pfam" id="PF18554">
    <property type="entry name" value="PheRS_DBD2"/>
    <property type="match status" value="1"/>
</dbReference>
<dbReference type="Pfam" id="PF18553">
    <property type="entry name" value="PheRS_DBD3"/>
    <property type="match status" value="1"/>
</dbReference>
<dbReference type="Pfam" id="PF01409">
    <property type="entry name" value="tRNA-synt_2d"/>
    <property type="match status" value="1"/>
</dbReference>
<dbReference type="SUPFAM" id="SSF55681">
    <property type="entry name" value="Class II aaRS and biotin synthetases"/>
    <property type="match status" value="1"/>
</dbReference>
<dbReference type="SUPFAM" id="SSF46785">
    <property type="entry name" value="Winged helix' DNA-binding domain"/>
    <property type="match status" value="1"/>
</dbReference>
<dbReference type="PROSITE" id="PS50862">
    <property type="entry name" value="AA_TRNA_LIGASE_II"/>
    <property type="match status" value="1"/>
</dbReference>
<protein>
    <recommendedName>
        <fullName>Phenylalanine--tRNA ligase alpha subunit</fullName>
        <ecNumber evidence="4">6.1.1.20</ecNumber>
    </recommendedName>
    <alternativeName>
        <fullName>Phenylalanyl-tRNA synthetase alpha subunit</fullName>
        <shortName>PheRS</shortName>
    </alternativeName>
</protein>
<comment type="catalytic activity">
    <reaction evidence="4">
        <text>tRNA(Phe) + L-phenylalanine + ATP = L-phenylalanyl-tRNA(Phe) + AMP + diphosphate + H(+)</text>
        <dbReference type="Rhea" id="RHEA:19413"/>
        <dbReference type="Rhea" id="RHEA-COMP:9668"/>
        <dbReference type="Rhea" id="RHEA-COMP:9699"/>
        <dbReference type="ChEBI" id="CHEBI:15378"/>
        <dbReference type="ChEBI" id="CHEBI:30616"/>
        <dbReference type="ChEBI" id="CHEBI:33019"/>
        <dbReference type="ChEBI" id="CHEBI:58095"/>
        <dbReference type="ChEBI" id="CHEBI:78442"/>
        <dbReference type="ChEBI" id="CHEBI:78531"/>
        <dbReference type="ChEBI" id="CHEBI:456215"/>
        <dbReference type="EC" id="6.1.1.20"/>
    </reaction>
    <physiologicalReaction direction="left-to-right" evidence="4">
        <dbReference type="Rhea" id="RHEA:19414"/>
    </physiologicalReaction>
</comment>
<comment type="cofactor">
    <cofactor evidence="2">
        <name>Mg(2+)</name>
        <dbReference type="ChEBI" id="CHEBI:18420"/>
    </cofactor>
</comment>
<comment type="subunit">
    <text evidence="4">Heterotetramer; dimer of two heterodimers formed by alpha and beta subunits.</text>
</comment>
<comment type="subcellular location">
    <subcellularLocation>
        <location evidence="3">Cytoplasm</location>
    </subcellularLocation>
</comment>
<comment type="similarity">
    <text evidence="5">Belongs to the class-II aminoacyl-tRNA synthetase family. Phe-tRNA synthetase alpha subunit type 2 subfamily.</text>
</comment>
<accession>Q1JPX3</accession>
<accession>Q6NYF9</accession>
<name>SYFA_DANRE</name>
<gene>
    <name type="primary">farsa</name>
    <name type="synonym">farsla</name>
    <name type="ORF">zgc:136506</name>
    <name type="ORF">zgc:158185</name>
</gene>
<keyword id="KW-0030">Aminoacyl-tRNA synthetase</keyword>
<keyword id="KW-0067">ATP-binding</keyword>
<keyword id="KW-0963">Cytoplasm</keyword>
<keyword id="KW-0436">Ligase</keyword>
<keyword id="KW-0460">Magnesium</keyword>
<keyword id="KW-0479">Metal-binding</keyword>
<keyword id="KW-0547">Nucleotide-binding</keyword>
<keyword id="KW-0648">Protein biosynthesis</keyword>
<keyword id="KW-1185">Reference proteome</keyword>
<reference key="1">
    <citation type="submission" date="2006-05" db="EMBL/GenBank/DDBJ databases">
        <authorList>
            <consortium name="NIH - Zebrafish Gene Collection (ZGC) project"/>
        </authorList>
    </citation>
    <scope>NUCLEOTIDE SEQUENCE [LARGE SCALE MRNA]</scope>
    <source>
        <tissue>Eye</tissue>
        <tissue>Kidney</tissue>
    </source>
</reference>
<organism>
    <name type="scientific">Danio rerio</name>
    <name type="common">Zebrafish</name>
    <name type="synonym">Brachydanio rerio</name>
    <dbReference type="NCBI Taxonomy" id="7955"/>
    <lineage>
        <taxon>Eukaryota</taxon>
        <taxon>Metazoa</taxon>
        <taxon>Chordata</taxon>
        <taxon>Craniata</taxon>
        <taxon>Vertebrata</taxon>
        <taxon>Euteleostomi</taxon>
        <taxon>Actinopterygii</taxon>
        <taxon>Neopterygii</taxon>
        <taxon>Teleostei</taxon>
        <taxon>Ostariophysi</taxon>
        <taxon>Cypriniformes</taxon>
        <taxon>Danionidae</taxon>
        <taxon>Danioninae</taxon>
        <taxon>Danio</taxon>
    </lineage>
</organism>
<proteinExistence type="evidence at transcript level"/>
<feature type="initiator methionine" description="Removed" evidence="1">
    <location>
        <position position="1"/>
    </location>
</feature>
<feature type="chain" id="PRO_0000280451" description="Phenylalanine--tRNA ligase alpha subunit">
    <location>
        <begin position="2"/>
        <end position="497"/>
    </location>
</feature>
<feature type="binding site" evidence="4">
    <location>
        <position position="329"/>
    </location>
    <ligand>
        <name>L-phenylalanine</name>
        <dbReference type="ChEBI" id="CHEBI:58095"/>
    </ligand>
</feature>
<feature type="binding site" evidence="4">
    <location>
        <begin position="372"/>
        <end position="374"/>
    </location>
    <ligand>
        <name>L-phenylalanine</name>
        <dbReference type="ChEBI" id="CHEBI:58095"/>
    </ligand>
</feature>
<feature type="binding site" evidence="4">
    <location>
        <position position="412"/>
    </location>
    <ligand>
        <name>L-phenylalanine</name>
        <dbReference type="ChEBI" id="CHEBI:58095"/>
    </ligand>
</feature>
<feature type="binding site" evidence="2">
    <location>
        <position position="414"/>
    </location>
    <ligand>
        <name>Mg(2+)</name>
        <dbReference type="ChEBI" id="CHEBI:18420"/>
        <note>shared with beta subunit</note>
    </ligand>
</feature>
<feature type="binding site" evidence="4">
    <location>
        <position position="438"/>
    </location>
    <ligand>
        <name>L-phenylalanine</name>
        <dbReference type="ChEBI" id="CHEBI:58095"/>
    </ligand>
</feature>
<feature type="sequence conflict" description="In Ref. 1; AAI16565." evidence="5" ref="1">
    <original>K</original>
    <variation>E</variation>
    <location>
        <position position="106"/>
    </location>
</feature>
<feature type="sequence conflict" description="In Ref. 1; AAI16565." evidence="5" ref="1">
    <original>K</original>
    <variation>E</variation>
    <location>
        <position position="154"/>
    </location>
</feature>
<feature type="sequence conflict" description="In Ref. 1; AAH66611." evidence="5" ref="1">
    <original>N</original>
    <variation>S</variation>
    <location>
        <position position="179"/>
    </location>
</feature>
<feature type="sequence conflict" description="In Ref. 1; AAI16565." evidence="5" ref="1">
    <original>Q</original>
    <variation>R</variation>
    <location>
        <position position="264"/>
    </location>
</feature>
<evidence type="ECO:0000250" key="1"/>
<evidence type="ECO:0000250" key="2">
    <source>
        <dbReference type="UniProtKB" id="A5K9S0"/>
    </source>
</evidence>
<evidence type="ECO:0000250" key="3">
    <source>
        <dbReference type="UniProtKB" id="Q505J8"/>
    </source>
</evidence>
<evidence type="ECO:0000250" key="4">
    <source>
        <dbReference type="UniProtKB" id="Q9Y285"/>
    </source>
</evidence>
<evidence type="ECO:0000305" key="5"/>
<sequence>MADTGLLEALLQRVEQLDGGVDSQDVSAALGVDHQLVVGAVKSLQALGEVISAEQKSSKHWELTGEGREIAEQGSHEARVFNAIPAEGLPQNQLMKMASGKVGFSKAMSNKWIRLDKAHEGGPRVFRTVESIEDTVRDKLQLVQNGQSAKLEEKEKNELKKRKLLAEVTVKSYWITKGNSFSTTITKQETELTPEMIASGNWKEKKFKPYNFEAMGVAPDCGHLHPLMKVRTQFRQIFLEMGFTEMPTNNFIESSFWNFDSLFQPQQHPARDQHDTFFISDPALAHEFPRDYLERVKKVHSEGGYGSQGYKYDWKIEEAQKNLLRTHTTAVSARMLYKLAQQEKFTPVKYFSIDRVFRNETLDATHLAEFHQIEGVVADYGLTLGNLMGVLHQFFTKLGITKLRFKPAYNPYTEPSMEVFSYHEGLKKWVEVGNSGVFRPEMLLPMGLPEGVSVIAWGLSLERPTMIKYGINNIRELVGHKVNLQMVYDSPICRLDS</sequence>